<sequence>MARNKPLAKKLRLAKAMKQNRRVPVWVIVKTNRRVLTHPKRRHWRRTKLKE</sequence>
<evidence type="ECO:0000305" key="1"/>
<protein>
    <recommendedName>
        <fullName evidence="1">Large ribosomal subunit protein eL39</fullName>
    </recommendedName>
    <alternativeName>
        <fullName>50S ribosomal protein L39e</fullName>
    </alternativeName>
</protein>
<keyword id="KW-0687">Ribonucleoprotein</keyword>
<keyword id="KW-0689">Ribosomal protein</keyword>
<feature type="chain" id="PRO_0000127056" description="Large ribosomal subunit protein eL39">
    <location>
        <begin position="1"/>
        <end position="51"/>
    </location>
</feature>
<organism>
    <name type="scientific">Pyrococcus abyssi (strain GE5 / Orsay)</name>
    <dbReference type="NCBI Taxonomy" id="272844"/>
    <lineage>
        <taxon>Archaea</taxon>
        <taxon>Methanobacteriati</taxon>
        <taxon>Methanobacteriota</taxon>
        <taxon>Thermococci</taxon>
        <taxon>Thermococcales</taxon>
        <taxon>Thermococcaceae</taxon>
        <taxon>Pyrococcus</taxon>
    </lineage>
</organism>
<reference key="1">
    <citation type="journal article" date="2003" name="Mol. Microbiol.">
        <title>An integrated analysis of the genome of the hyperthermophilic archaeon Pyrococcus abyssi.</title>
        <authorList>
            <person name="Cohen G.N."/>
            <person name="Barbe V."/>
            <person name="Flament D."/>
            <person name="Galperin M."/>
            <person name="Heilig R."/>
            <person name="Lecompte O."/>
            <person name="Poch O."/>
            <person name="Prieur D."/>
            <person name="Querellou J."/>
            <person name="Ripp R."/>
            <person name="Thierry J.-C."/>
            <person name="Van der Oost J."/>
            <person name="Weissenbach J."/>
            <person name="Zivanovic Y."/>
            <person name="Forterre P."/>
        </authorList>
    </citation>
    <scope>NUCLEOTIDE SEQUENCE [LARGE SCALE GENOMIC DNA]</scope>
    <source>
        <strain>GE5 / Orsay</strain>
    </source>
</reference>
<reference key="2">
    <citation type="journal article" date="2012" name="Curr. Microbiol.">
        <title>Re-annotation of two hyperthermophilic archaea Pyrococcus abyssi GE5 and Pyrococcus furiosus DSM 3638.</title>
        <authorList>
            <person name="Gao J."/>
            <person name="Wang J."/>
        </authorList>
    </citation>
    <scope>GENOME REANNOTATION</scope>
    <source>
        <strain>GE5 / Orsay</strain>
    </source>
</reference>
<name>RL39_PYRAB</name>
<accession>Q9UYI8</accession>
<accession>G8ZIU0</accession>
<gene>
    <name type="primary">rpl39e</name>
    <name type="ordered locus">PYRAB15190</name>
    <name type="ORF">PAB3384</name>
</gene>
<proteinExistence type="inferred from homology"/>
<dbReference type="EMBL" id="AJ248287">
    <property type="protein sequence ID" value="CAB50424.1"/>
    <property type="molecule type" value="Genomic_DNA"/>
</dbReference>
<dbReference type="EMBL" id="HE613800">
    <property type="protein sequence ID" value="CCE70973.1"/>
    <property type="molecule type" value="Genomic_DNA"/>
</dbReference>
<dbReference type="PIR" id="C75066">
    <property type="entry name" value="C75066"/>
</dbReference>
<dbReference type="RefSeq" id="WP_010868637.1">
    <property type="nucleotide sequence ID" value="NC_000868.1"/>
</dbReference>
<dbReference type="SMR" id="Q9UYI8"/>
<dbReference type="STRING" id="272844.PAB3384"/>
<dbReference type="KEGG" id="pab:PAB3384"/>
<dbReference type="PATRIC" id="fig|272844.11.peg.1618"/>
<dbReference type="eggNOG" id="arCOG04177">
    <property type="taxonomic scope" value="Archaea"/>
</dbReference>
<dbReference type="HOGENOM" id="CLU_181948_4_0_2"/>
<dbReference type="OrthoDB" id="65887at2157"/>
<dbReference type="PhylomeDB" id="Q9UYI8"/>
<dbReference type="Proteomes" id="UP000000810">
    <property type="component" value="Chromosome"/>
</dbReference>
<dbReference type="Proteomes" id="UP000009139">
    <property type="component" value="Chromosome"/>
</dbReference>
<dbReference type="GO" id="GO:0022625">
    <property type="term" value="C:cytosolic large ribosomal subunit"/>
    <property type="evidence" value="ECO:0007669"/>
    <property type="project" value="TreeGrafter"/>
</dbReference>
<dbReference type="GO" id="GO:0003735">
    <property type="term" value="F:structural constituent of ribosome"/>
    <property type="evidence" value="ECO:0007669"/>
    <property type="project" value="InterPro"/>
</dbReference>
<dbReference type="GO" id="GO:0006412">
    <property type="term" value="P:translation"/>
    <property type="evidence" value="ECO:0007669"/>
    <property type="project" value="UniProtKB-UniRule"/>
</dbReference>
<dbReference type="FunFam" id="1.10.1620.10:FF:000001">
    <property type="entry name" value="60S ribosomal protein-like L39"/>
    <property type="match status" value="1"/>
</dbReference>
<dbReference type="Gene3D" id="1.10.1620.10">
    <property type="entry name" value="Ribosomal protein L39e"/>
    <property type="match status" value="1"/>
</dbReference>
<dbReference type="HAMAP" id="MF_00629">
    <property type="entry name" value="Ribosomal_eL39"/>
    <property type="match status" value="1"/>
</dbReference>
<dbReference type="InterPro" id="IPR000077">
    <property type="entry name" value="Ribosomal_eL39"/>
</dbReference>
<dbReference type="InterPro" id="IPR020083">
    <property type="entry name" value="Ribosomal_eL39_CS"/>
</dbReference>
<dbReference type="InterPro" id="IPR023626">
    <property type="entry name" value="Ribosomal_eL39_dom_sf"/>
</dbReference>
<dbReference type="NCBIfam" id="NF002316">
    <property type="entry name" value="PRK01242.1"/>
    <property type="match status" value="1"/>
</dbReference>
<dbReference type="PANTHER" id="PTHR19970:SF0">
    <property type="entry name" value="LARGE RIBOSOMAL SUBUNIT PROTEIN EL39"/>
    <property type="match status" value="1"/>
</dbReference>
<dbReference type="PANTHER" id="PTHR19970">
    <property type="entry name" value="RIBOSOMAL PROTEIN L39E"/>
    <property type="match status" value="1"/>
</dbReference>
<dbReference type="Pfam" id="PF00832">
    <property type="entry name" value="Ribosomal_L39"/>
    <property type="match status" value="1"/>
</dbReference>
<dbReference type="SUPFAM" id="SSF48662">
    <property type="entry name" value="Ribosomal protein L39e"/>
    <property type="match status" value="1"/>
</dbReference>
<dbReference type="PROSITE" id="PS00051">
    <property type="entry name" value="RIBOSOMAL_L39E"/>
    <property type="match status" value="1"/>
</dbReference>
<comment type="similarity">
    <text evidence="1">Belongs to the eukaryotic ribosomal protein eL39 family.</text>
</comment>